<keyword id="KW-0067">ATP-binding</keyword>
<keyword id="KW-0963">Cytoplasm</keyword>
<keyword id="KW-0235">DNA replication</keyword>
<keyword id="KW-0238">DNA-binding</keyword>
<keyword id="KW-0446">Lipid-binding</keyword>
<keyword id="KW-0547">Nucleotide-binding</keyword>
<comment type="function">
    <text evidence="1">Plays an essential role in the initiation and regulation of chromosomal replication. ATP-DnaA binds to the origin of replication (oriC) to initiate formation of the DNA replication initiation complex once per cell cycle. Binds the DnaA box (a 9 base pair repeat at the origin) and separates the double-stranded (ds)DNA. Forms a right-handed helical filament on oriC DNA; dsDNA binds to the exterior of the filament while single-stranded (ss)DNA is stabiized in the filament's interior. The ATP-DnaA-oriC complex binds and stabilizes one strand of the AT-rich DNA unwinding element (DUE), permitting loading of DNA polymerase. After initiation quickly degrades to an ADP-DnaA complex that is not apt for DNA replication. Binds acidic phospholipids.</text>
</comment>
<comment type="subunit">
    <text evidence="1">Oligomerizes as a right-handed, spiral filament on DNA at oriC.</text>
</comment>
<comment type="subcellular location">
    <subcellularLocation>
        <location evidence="1">Cytoplasm</location>
    </subcellularLocation>
</comment>
<comment type="domain">
    <text evidence="1">Domain I is involved in oligomerization and binding regulators, domain II is flexibile and of varying length in different bacteria, domain III forms the AAA+ region, while domain IV binds dsDNA.</text>
</comment>
<comment type="similarity">
    <text evidence="1">Belongs to the DnaA family.</text>
</comment>
<protein>
    <recommendedName>
        <fullName evidence="1">Chromosomal replication initiator protein DnaA</fullName>
    </recommendedName>
</protein>
<evidence type="ECO:0000255" key="1">
    <source>
        <dbReference type="HAMAP-Rule" id="MF_00377"/>
    </source>
</evidence>
<name>DNAA_STRP8</name>
<proteinExistence type="inferred from homology"/>
<accession>P0A3A6</accession>
<accession>Q9L572</accession>
<gene>
    <name evidence="1" type="primary">dnaA</name>
    <name type="ordered locus">spyM18_0001</name>
</gene>
<sequence length="451" mass="51665">MTENEQIFWNRVLELAQSQLKQATYEFFVHDARLLKVDKHIATIYLDQMKELFWEKNLKDVILTAGFEVYNAQISVDYVFEEDLMIEQNQTKINQKPKQQALNSLPTVTSDLNSKYSFENFIQGDENRWAVAASIAVANTPGTTYNPLFIWGGPGLGKTHLLNAIGNSVLLENPNARIKYITAENFINEFVIHIRLDTMDELKEKFRNLDLLLIDDIQSLAKKTLSGTQEEFFNTFNALHNNNKQIVLTSDRTPDHLNDLEDRLVTRFKWGLTVNITPPDFETRVAILTNKIQEYNFIFPQDTIEYLAGQFDSNVRDLEGALKDISLVANFKQIDTITVDIAAEAIRARKQDGPKMTVIPIEEIQAQVGKFYGVTVKEIKATKRTQNIVLARQVAMFLAREMTDNSLPKIGKEFGGRDHSTVLHAYNKIKNMISQDESLRIEIETIKNKIK</sequence>
<feature type="chain" id="PRO_0000114278" description="Chromosomal replication initiator protein DnaA">
    <location>
        <begin position="1"/>
        <end position="451"/>
    </location>
</feature>
<feature type="region of interest" description="Domain I, interacts with DnaA modulators" evidence="1">
    <location>
        <begin position="1"/>
        <end position="77"/>
    </location>
</feature>
<feature type="region of interest" description="Domain II" evidence="1">
    <location>
        <begin position="77"/>
        <end position="110"/>
    </location>
</feature>
<feature type="region of interest" description="Domain III, AAA+ region" evidence="1">
    <location>
        <begin position="111"/>
        <end position="329"/>
    </location>
</feature>
<feature type="region of interest" description="Domain IV, binds dsDNA" evidence="1">
    <location>
        <begin position="330"/>
        <end position="451"/>
    </location>
</feature>
<feature type="binding site" evidence="1">
    <location>
        <position position="155"/>
    </location>
    <ligand>
        <name>ATP</name>
        <dbReference type="ChEBI" id="CHEBI:30616"/>
    </ligand>
</feature>
<feature type="binding site" evidence="1">
    <location>
        <position position="157"/>
    </location>
    <ligand>
        <name>ATP</name>
        <dbReference type="ChEBI" id="CHEBI:30616"/>
    </ligand>
</feature>
<feature type="binding site" evidence="1">
    <location>
        <position position="158"/>
    </location>
    <ligand>
        <name>ATP</name>
        <dbReference type="ChEBI" id="CHEBI:30616"/>
    </ligand>
</feature>
<feature type="binding site" evidence="1">
    <location>
        <position position="159"/>
    </location>
    <ligand>
        <name>ATP</name>
        <dbReference type="ChEBI" id="CHEBI:30616"/>
    </ligand>
</feature>
<organism>
    <name type="scientific">Streptococcus pyogenes serotype M18 (strain MGAS8232)</name>
    <dbReference type="NCBI Taxonomy" id="186103"/>
    <lineage>
        <taxon>Bacteria</taxon>
        <taxon>Bacillati</taxon>
        <taxon>Bacillota</taxon>
        <taxon>Bacilli</taxon>
        <taxon>Lactobacillales</taxon>
        <taxon>Streptococcaceae</taxon>
        <taxon>Streptococcus</taxon>
    </lineage>
</organism>
<reference key="1">
    <citation type="journal article" date="2002" name="Proc. Natl. Acad. Sci. U.S.A.">
        <title>Genome sequence and comparative microarray analysis of serotype M18 group A Streptococcus strains associated with acute rheumatic fever outbreaks.</title>
        <authorList>
            <person name="Smoot J.C."/>
            <person name="Barbian K.D."/>
            <person name="Van Gompel J.J."/>
            <person name="Smoot L.M."/>
            <person name="Chaussee M.S."/>
            <person name="Sylva G.L."/>
            <person name="Sturdevant D.E."/>
            <person name="Ricklefs S.M."/>
            <person name="Porcella S.F."/>
            <person name="Parkins L.D."/>
            <person name="Beres S.B."/>
            <person name="Campbell D.S."/>
            <person name="Smith T.M."/>
            <person name="Zhang Q."/>
            <person name="Kapur V."/>
            <person name="Daly J.A."/>
            <person name="Veasy L.G."/>
            <person name="Musser J.M."/>
        </authorList>
    </citation>
    <scope>NUCLEOTIDE SEQUENCE [LARGE SCALE GENOMIC DNA]</scope>
    <source>
        <strain>MGAS8232</strain>
    </source>
</reference>
<dbReference type="EMBL" id="AE009949">
    <property type="protein sequence ID" value="AAL96837.1"/>
    <property type="molecule type" value="Genomic_DNA"/>
</dbReference>
<dbReference type="RefSeq" id="WP_002987659.1">
    <property type="nucleotide sequence ID" value="NC_003485.1"/>
</dbReference>
<dbReference type="SMR" id="P0A3A6"/>
<dbReference type="GeneID" id="69899953"/>
<dbReference type="KEGG" id="spm:spyM18_0001"/>
<dbReference type="HOGENOM" id="CLU_026910_3_2_9"/>
<dbReference type="GO" id="GO:0005737">
    <property type="term" value="C:cytoplasm"/>
    <property type="evidence" value="ECO:0007669"/>
    <property type="project" value="UniProtKB-SubCell"/>
</dbReference>
<dbReference type="GO" id="GO:0005886">
    <property type="term" value="C:plasma membrane"/>
    <property type="evidence" value="ECO:0007669"/>
    <property type="project" value="TreeGrafter"/>
</dbReference>
<dbReference type="GO" id="GO:0005524">
    <property type="term" value="F:ATP binding"/>
    <property type="evidence" value="ECO:0007669"/>
    <property type="project" value="UniProtKB-UniRule"/>
</dbReference>
<dbReference type="GO" id="GO:0016887">
    <property type="term" value="F:ATP hydrolysis activity"/>
    <property type="evidence" value="ECO:0007669"/>
    <property type="project" value="InterPro"/>
</dbReference>
<dbReference type="GO" id="GO:0003688">
    <property type="term" value="F:DNA replication origin binding"/>
    <property type="evidence" value="ECO:0007669"/>
    <property type="project" value="UniProtKB-UniRule"/>
</dbReference>
<dbReference type="GO" id="GO:0008289">
    <property type="term" value="F:lipid binding"/>
    <property type="evidence" value="ECO:0007669"/>
    <property type="project" value="UniProtKB-KW"/>
</dbReference>
<dbReference type="GO" id="GO:0006270">
    <property type="term" value="P:DNA replication initiation"/>
    <property type="evidence" value="ECO:0007669"/>
    <property type="project" value="UniProtKB-UniRule"/>
</dbReference>
<dbReference type="GO" id="GO:0006275">
    <property type="term" value="P:regulation of DNA replication"/>
    <property type="evidence" value="ECO:0007669"/>
    <property type="project" value="UniProtKB-UniRule"/>
</dbReference>
<dbReference type="CDD" id="cd00009">
    <property type="entry name" value="AAA"/>
    <property type="match status" value="1"/>
</dbReference>
<dbReference type="CDD" id="cd06571">
    <property type="entry name" value="Bac_DnaA_C"/>
    <property type="match status" value="1"/>
</dbReference>
<dbReference type="FunFam" id="1.10.1750.10:FF:000002">
    <property type="entry name" value="Chromosomal replication initiator protein DnaA"/>
    <property type="match status" value="1"/>
</dbReference>
<dbReference type="FunFam" id="3.40.50.300:FF:000668">
    <property type="entry name" value="Chromosomal replication initiator protein DnaA"/>
    <property type="match status" value="1"/>
</dbReference>
<dbReference type="Gene3D" id="1.10.1750.10">
    <property type="match status" value="1"/>
</dbReference>
<dbReference type="Gene3D" id="1.10.8.60">
    <property type="match status" value="1"/>
</dbReference>
<dbReference type="Gene3D" id="3.40.50.300">
    <property type="entry name" value="P-loop containing nucleotide triphosphate hydrolases"/>
    <property type="match status" value="1"/>
</dbReference>
<dbReference type="HAMAP" id="MF_00377">
    <property type="entry name" value="DnaA_bact"/>
    <property type="match status" value="1"/>
</dbReference>
<dbReference type="InterPro" id="IPR003593">
    <property type="entry name" value="AAA+_ATPase"/>
</dbReference>
<dbReference type="InterPro" id="IPR001957">
    <property type="entry name" value="Chromosome_initiator_DnaA"/>
</dbReference>
<dbReference type="InterPro" id="IPR020591">
    <property type="entry name" value="Chromosome_initiator_DnaA-like"/>
</dbReference>
<dbReference type="InterPro" id="IPR018312">
    <property type="entry name" value="Chromosome_initiator_DnaA_CS"/>
</dbReference>
<dbReference type="InterPro" id="IPR013159">
    <property type="entry name" value="DnaA_C"/>
</dbReference>
<dbReference type="InterPro" id="IPR013317">
    <property type="entry name" value="DnaA_dom"/>
</dbReference>
<dbReference type="InterPro" id="IPR027417">
    <property type="entry name" value="P-loop_NTPase"/>
</dbReference>
<dbReference type="InterPro" id="IPR010921">
    <property type="entry name" value="Trp_repressor/repl_initiator"/>
</dbReference>
<dbReference type="NCBIfam" id="TIGR00362">
    <property type="entry name" value="DnaA"/>
    <property type="match status" value="1"/>
</dbReference>
<dbReference type="PANTHER" id="PTHR30050">
    <property type="entry name" value="CHROMOSOMAL REPLICATION INITIATOR PROTEIN DNAA"/>
    <property type="match status" value="1"/>
</dbReference>
<dbReference type="PANTHER" id="PTHR30050:SF2">
    <property type="entry name" value="CHROMOSOMAL REPLICATION INITIATOR PROTEIN DNAA"/>
    <property type="match status" value="1"/>
</dbReference>
<dbReference type="Pfam" id="PF00308">
    <property type="entry name" value="Bac_DnaA"/>
    <property type="match status" value="1"/>
</dbReference>
<dbReference type="Pfam" id="PF08299">
    <property type="entry name" value="Bac_DnaA_C"/>
    <property type="match status" value="1"/>
</dbReference>
<dbReference type="PRINTS" id="PR00051">
    <property type="entry name" value="DNAA"/>
</dbReference>
<dbReference type="SMART" id="SM00382">
    <property type="entry name" value="AAA"/>
    <property type="match status" value="1"/>
</dbReference>
<dbReference type="SMART" id="SM00760">
    <property type="entry name" value="Bac_DnaA_C"/>
    <property type="match status" value="1"/>
</dbReference>
<dbReference type="SUPFAM" id="SSF52540">
    <property type="entry name" value="P-loop containing nucleoside triphosphate hydrolases"/>
    <property type="match status" value="1"/>
</dbReference>
<dbReference type="SUPFAM" id="SSF48295">
    <property type="entry name" value="TrpR-like"/>
    <property type="match status" value="1"/>
</dbReference>
<dbReference type="PROSITE" id="PS01008">
    <property type="entry name" value="DNAA"/>
    <property type="match status" value="1"/>
</dbReference>